<proteinExistence type="inferred from homology"/>
<feature type="chain" id="PRO_0000214655" description="UPF0231 protein YacL">
    <location>
        <begin position="1"/>
        <end position="120"/>
    </location>
</feature>
<gene>
    <name evidence="1" type="primary">yacL</name>
    <name type="ordered locus">STY0182</name>
    <name type="ordered locus">t0165</name>
</gene>
<name>YACL_SALTI</name>
<reference key="1">
    <citation type="journal article" date="2001" name="Nature">
        <title>Complete genome sequence of a multiple drug resistant Salmonella enterica serovar Typhi CT18.</title>
        <authorList>
            <person name="Parkhill J."/>
            <person name="Dougan G."/>
            <person name="James K.D."/>
            <person name="Thomson N.R."/>
            <person name="Pickard D."/>
            <person name="Wain J."/>
            <person name="Churcher C.M."/>
            <person name="Mungall K.L."/>
            <person name="Bentley S.D."/>
            <person name="Holden M.T.G."/>
            <person name="Sebaihia M."/>
            <person name="Baker S."/>
            <person name="Basham D."/>
            <person name="Brooks K."/>
            <person name="Chillingworth T."/>
            <person name="Connerton P."/>
            <person name="Cronin A."/>
            <person name="Davis P."/>
            <person name="Davies R.M."/>
            <person name="Dowd L."/>
            <person name="White N."/>
            <person name="Farrar J."/>
            <person name="Feltwell T."/>
            <person name="Hamlin N."/>
            <person name="Haque A."/>
            <person name="Hien T.T."/>
            <person name="Holroyd S."/>
            <person name="Jagels K."/>
            <person name="Krogh A."/>
            <person name="Larsen T.S."/>
            <person name="Leather S."/>
            <person name="Moule S."/>
            <person name="O'Gaora P."/>
            <person name="Parry C."/>
            <person name="Quail M.A."/>
            <person name="Rutherford K.M."/>
            <person name="Simmonds M."/>
            <person name="Skelton J."/>
            <person name="Stevens K."/>
            <person name="Whitehead S."/>
            <person name="Barrell B.G."/>
        </authorList>
    </citation>
    <scope>NUCLEOTIDE SEQUENCE [LARGE SCALE GENOMIC DNA]</scope>
    <source>
        <strain>CT18</strain>
    </source>
</reference>
<reference key="2">
    <citation type="journal article" date="2003" name="J. Bacteriol.">
        <title>Comparative genomics of Salmonella enterica serovar Typhi strains Ty2 and CT18.</title>
        <authorList>
            <person name="Deng W."/>
            <person name="Liou S.-R."/>
            <person name="Plunkett G. III"/>
            <person name="Mayhew G.F."/>
            <person name="Rose D.J."/>
            <person name="Burland V."/>
            <person name="Kodoyianni V."/>
            <person name="Schwartz D.C."/>
            <person name="Blattner F.R."/>
        </authorList>
    </citation>
    <scope>NUCLEOTIDE SEQUENCE [LARGE SCALE GENOMIC DNA]</scope>
    <source>
        <strain>ATCC 700931 / Ty2</strain>
    </source>
</reference>
<evidence type="ECO:0000255" key="1">
    <source>
        <dbReference type="HAMAP-Rule" id="MF_01053"/>
    </source>
</evidence>
<comment type="similarity">
    <text evidence="1">Belongs to the UPF0231 family.</text>
</comment>
<sequence>MDYEFLRDVTGRVLVRMSMGHEVVGHWFNEEVKDNLSLLDEVEQAARTVKGSERSWQRAGHEYTIWMDGEEVMIRANQLDFSGDEMEEGMSYYDEESLSLCGMEDFLRVVAAYREFVSKA</sequence>
<dbReference type="EMBL" id="AL513382">
    <property type="protein sequence ID" value="CAD01318.1"/>
    <property type="molecule type" value="Genomic_DNA"/>
</dbReference>
<dbReference type="EMBL" id="AE014613">
    <property type="protein sequence ID" value="AAO67897.1"/>
    <property type="molecule type" value="Genomic_DNA"/>
</dbReference>
<dbReference type="RefSeq" id="NP_454773.1">
    <property type="nucleotide sequence ID" value="NC_003198.1"/>
</dbReference>
<dbReference type="RefSeq" id="WP_000384314.1">
    <property type="nucleotide sequence ID" value="NZ_WSUR01000009.1"/>
</dbReference>
<dbReference type="SMR" id="Q8Z9E5"/>
<dbReference type="STRING" id="220341.gene:17584220"/>
<dbReference type="KEGG" id="stt:t0165"/>
<dbReference type="KEGG" id="sty:STY0182"/>
<dbReference type="PATRIC" id="fig|220341.7.peg.184"/>
<dbReference type="eggNOG" id="COG3112">
    <property type="taxonomic scope" value="Bacteria"/>
</dbReference>
<dbReference type="HOGENOM" id="CLU_139226_0_0_6"/>
<dbReference type="OMA" id="FSMDHEA"/>
<dbReference type="OrthoDB" id="5739292at2"/>
<dbReference type="Proteomes" id="UP000000541">
    <property type="component" value="Chromosome"/>
</dbReference>
<dbReference type="Proteomes" id="UP000002670">
    <property type="component" value="Chromosome"/>
</dbReference>
<dbReference type="HAMAP" id="MF_01053">
    <property type="entry name" value="UPF0231"/>
    <property type="match status" value="1"/>
</dbReference>
<dbReference type="InterPro" id="IPR008249">
    <property type="entry name" value="UPF0231"/>
</dbReference>
<dbReference type="NCBIfam" id="NF003574">
    <property type="entry name" value="PRK05248.1-1"/>
    <property type="match status" value="1"/>
</dbReference>
<dbReference type="NCBIfam" id="NF003576">
    <property type="entry name" value="PRK05248.1-3"/>
    <property type="match status" value="1"/>
</dbReference>
<dbReference type="Pfam" id="PF06062">
    <property type="entry name" value="UPF0231"/>
    <property type="match status" value="1"/>
</dbReference>
<dbReference type="PIRSF" id="PIRSF006287">
    <property type="entry name" value="UCP006287"/>
    <property type="match status" value="1"/>
</dbReference>
<accession>Q8Z9E5</accession>
<protein>
    <recommendedName>
        <fullName evidence="1">UPF0231 protein YacL</fullName>
    </recommendedName>
</protein>
<organism>
    <name type="scientific">Salmonella typhi</name>
    <dbReference type="NCBI Taxonomy" id="90370"/>
    <lineage>
        <taxon>Bacteria</taxon>
        <taxon>Pseudomonadati</taxon>
        <taxon>Pseudomonadota</taxon>
        <taxon>Gammaproteobacteria</taxon>
        <taxon>Enterobacterales</taxon>
        <taxon>Enterobacteriaceae</taxon>
        <taxon>Salmonella</taxon>
    </lineage>
</organism>